<accession>Q5M8F7</accession>
<reference key="1">
    <citation type="submission" date="2006-10" db="EMBL/GenBank/DDBJ databases">
        <authorList>
            <consortium name="Sanger Xenopus tropicalis EST/cDNA project"/>
        </authorList>
    </citation>
    <scope>NUCLEOTIDE SEQUENCE [LARGE SCALE MRNA]</scope>
    <source>
        <tissue>Egg</tissue>
    </source>
</reference>
<reference key="2">
    <citation type="submission" date="2004-12" db="EMBL/GenBank/DDBJ databases">
        <authorList>
            <consortium name="NIH - Xenopus Gene Collection (XGC) project"/>
        </authorList>
    </citation>
    <scope>NUCLEOTIDE SEQUENCE [LARGE SCALE MRNA]</scope>
</reference>
<name>NEPR1_XENTR</name>
<feature type="chain" id="PRO_0000286620" description="Nuclear envelope phosphatase-regulatory subunit 1">
    <location>
        <begin position="1"/>
        <end position="125"/>
    </location>
</feature>
<feature type="transmembrane region" description="Helical" evidence="2">
    <location>
        <begin position="33"/>
        <end position="53"/>
    </location>
</feature>
<feature type="transmembrane region" description="Helical" evidence="2">
    <location>
        <begin position="65"/>
        <end position="85"/>
    </location>
</feature>
<sequence>MNSLEQAEDLKAFERRLTEYVSCLQPATGRWRMILIVVSVCTATGAWNWLIDPETQKVSFFTSLWNHPFFTISCITLIGLFFAGIHKRVVAPSIIAARCRTVLAEYNMSCDDTGKLILKPRPHVQ</sequence>
<comment type="function">
    <text evidence="1">May form with the serine/threonine protein phosphatase ctdnep1 an active complex dephosphorylating and activating lipins. Lipins are phosphatidate phosphatases that catalyze the conversion of phosphatidic acid to diacylglycerol and control the metabolism of fatty acids at different levels. May indirectly modulate the lipid composition of nuclear and/or endoplasmic reticulum membranes and be required for proper nuclear membrane morphology and/or dynamics. May also indirectly regulate the production of lipid droplets and triacylglycerol (By similarity).</text>
</comment>
<comment type="subcellular location">
    <subcellularLocation>
        <location evidence="1">Nucleus membrane</location>
        <topology evidence="1">Multi-pass membrane protein</topology>
    </subcellularLocation>
    <subcellularLocation>
        <location evidence="1">Cytoplasm</location>
    </subcellularLocation>
</comment>
<comment type="similarity">
    <text evidence="3">Belongs to the CNEP1R1 family.</text>
</comment>
<gene>
    <name type="primary">cnep1r1</name>
    <name type="synonym">tmem188</name>
    <name type="ORF">TEgg132c10.1</name>
</gene>
<protein>
    <recommendedName>
        <fullName>Nuclear envelope phosphatase-regulatory subunit 1</fullName>
    </recommendedName>
    <alternativeName>
        <fullName>Transmembrane protein 188</fullName>
    </alternativeName>
</protein>
<keyword id="KW-0963">Cytoplasm</keyword>
<keyword id="KW-0443">Lipid metabolism</keyword>
<keyword id="KW-0472">Membrane</keyword>
<keyword id="KW-0539">Nucleus</keyword>
<keyword id="KW-1185">Reference proteome</keyword>
<keyword id="KW-0812">Transmembrane</keyword>
<keyword id="KW-1133">Transmembrane helix</keyword>
<proteinExistence type="evidence at transcript level"/>
<organism>
    <name type="scientific">Xenopus tropicalis</name>
    <name type="common">Western clawed frog</name>
    <name type="synonym">Silurana tropicalis</name>
    <dbReference type="NCBI Taxonomy" id="8364"/>
    <lineage>
        <taxon>Eukaryota</taxon>
        <taxon>Metazoa</taxon>
        <taxon>Chordata</taxon>
        <taxon>Craniata</taxon>
        <taxon>Vertebrata</taxon>
        <taxon>Euteleostomi</taxon>
        <taxon>Amphibia</taxon>
        <taxon>Batrachia</taxon>
        <taxon>Anura</taxon>
        <taxon>Pipoidea</taxon>
        <taxon>Pipidae</taxon>
        <taxon>Xenopodinae</taxon>
        <taxon>Xenopus</taxon>
        <taxon>Silurana</taxon>
    </lineage>
</organism>
<evidence type="ECO:0000250" key="1"/>
<evidence type="ECO:0000255" key="2"/>
<evidence type="ECO:0000305" key="3"/>
<dbReference type="EMBL" id="CR760569">
    <property type="protein sequence ID" value="CAJ81789.1"/>
    <property type="molecule type" value="mRNA"/>
</dbReference>
<dbReference type="EMBL" id="BC088044">
    <property type="protein sequence ID" value="AAH88044.1"/>
    <property type="molecule type" value="mRNA"/>
</dbReference>
<dbReference type="RefSeq" id="NP_001011315.1">
    <property type="nucleotide sequence ID" value="NM_001011315.2"/>
</dbReference>
<dbReference type="FunCoup" id="Q5M8F7">
    <property type="interactions" value="2035"/>
</dbReference>
<dbReference type="STRING" id="8364.ENSXETP00000039662"/>
<dbReference type="PaxDb" id="8364-ENSXETP00000051831"/>
<dbReference type="GeneID" id="496772"/>
<dbReference type="KEGG" id="xtr:496772"/>
<dbReference type="AGR" id="Xenbase:XB-GENE-5917931"/>
<dbReference type="CTD" id="255919"/>
<dbReference type="Xenbase" id="XB-GENE-5917931">
    <property type="gene designation" value="cnep1r1"/>
</dbReference>
<dbReference type="eggNOG" id="KOG4606">
    <property type="taxonomic scope" value="Eukaryota"/>
</dbReference>
<dbReference type="HOGENOM" id="CLU_138149_1_0_1"/>
<dbReference type="InParanoid" id="Q5M8F7"/>
<dbReference type="OMA" id="NHPFFAI"/>
<dbReference type="OrthoDB" id="5786980at2759"/>
<dbReference type="PhylomeDB" id="Q5M8F7"/>
<dbReference type="TreeFam" id="TF313179"/>
<dbReference type="Reactome" id="R-XTR-4419969">
    <property type="pathway name" value="Depolymerization of the Nuclear Lamina"/>
</dbReference>
<dbReference type="Proteomes" id="UP000008143">
    <property type="component" value="Chromosome 4"/>
</dbReference>
<dbReference type="GO" id="GO:0005737">
    <property type="term" value="C:cytoplasm"/>
    <property type="evidence" value="ECO:0000250"/>
    <property type="project" value="UniProtKB"/>
</dbReference>
<dbReference type="GO" id="GO:0071595">
    <property type="term" value="C:Nem1-Spo7 phosphatase complex"/>
    <property type="evidence" value="ECO:0000250"/>
    <property type="project" value="UniProtKB"/>
</dbReference>
<dbReference type="GO" id="GO:0031965">
    <property type="term" value="C:nuclear membrane"/>
    <property type="evidence" value="ECO:0000250"/>
    <property type="project" value="UniProtKB"/>
</dbReference>
<dbReference type="GO" id="GO:0019888">
    <property type="term" value="F:protein phosphatase regulator activity"/>
    <property type="evidence" value="ECO:0000250"/>
    <property type="project" value="UniProtKB"/>
</dbReference>
<dbReference type="GO" id="GO:0006629">
    <property type="term" value="P:lipid metabolic process"/>
    <property type="evidence" value="ECO:0007669"/>
    <property type="project" value="UniProtKB-KW"/>
</dbReference>
<dbReference type="GO" id="GO:0010867">
    <property type="term" value="P:positive regulation of triglyceride biosynthetic process"/>
    <property type="evidence" value="ECO:0000250"/>
    <property type="project" value="UniProtKB"/>
</dbReference>
<dbReference type="InterPro" id="IPR019168">
    <property type="entry name" value="NEP1-R1"/>
</dbReference>
<dbReference type="PANTHER" id="PTHR20996">
    <property type="entry name" value="NUCLEAR ENVELOPE PHOSPHATASE-REGULATORY SUBUNIT 1"/>
    <property type="match status" value="1"/>
</dbReference>
<dbReference type="PANTHER" id="PTHR20996:SF1">
    <property type="entry name" value="NUCLEAR ENVELOPE PHOSPHATASE-REGULATORY SUBUNIT 1"/>
    <property type="match status" value="1"/>
</dbReference>
<dbReference type="Pfam" id="PF09771">
    <property type="entry name" value="Tmemb_18A"/>
    <property type="match status" value="1"/>
</dbReference>